<organism>
    <name type="scientific">Jannaschia sp. (strain CCS1)</name>
    <dbReference type="NCBI Taxonomy" id="290400"/>
    <lineage>
        <taxon>Bacteria</taxon>
        <taxon>Pseudomonadati</taxon>
        <taxon>Pseudomonadota</taxon>
        <taxon>Alphaproteobacteria</taxon>
        <taxon>Rhodobacterales</taxon>
        <taxon>Roseobacteraceae</taxon>
        <taxon>Jannaschia</taxon>
    </lineage>
</organism>
<name>3HAO_JANSC</name>
<reference key="1">
    <citation type="submission" date="2006-02" db="EMBL/GenBank/DDBJ databases">
        <title>Complete sequence of chromosome of Jannaschia sp. CCS1.</title>
        <authorList>
            <consortium name="US DOE Joint Genome Institute"/>
            <person name="Copeland A."/>
            <person name="Lucas S."/>
            <person name="Lapidus A."/>
            <person name="Barry K."/>
            <person name="Detter J.C."/>
            <person name="Glavina del Rio T."/>
            <person name="Hammon N."/>
            <person name="Israni S."/>
            <person name="Pitluck S."/>
            <person name="Brettin T."/>
            <person name="Bruce D."/>
            <person name="Han C."/>
            <person name="Tapia R."/>
            <person name="Gilna P."/>
            <person name="Chertkov O."/>
            <person name="Saunders E."/>
            <person name="Schmutz J."/>
            <person name="Larimer F."/>
            <person name="Land M."/>
            <person name="Kyrpides N."/>
            <person name="Lykidis A."/>
            <person name="Moran M.A."/>
            <person name="Belas R."/>
            <person name="Ye W."/>
            <person name="Buchan A."/>
            <person name="Gonzalez J.M."/>
            <person name="Schell M.A."/>
            <person name="Richardson P."/>
        </authorList>
    </citation>
    <scope>NUCLEOTIDE SEQUENCE [LARGE SCALE GENOMIC DNA]</scope>
    <source>
        <strain>CCS1</strain>
    </source>
</reference>
<feature type="chain" id="PRO_0000245475" description="3-hydroxyanthranilate 3,4-dioxygenase">
    <location>
        <begin position="1"/>
        <end position="180"/>
    </location>
</feature>
<feature type="binding site" evidence="1">
    <location>
        <position position="46"/>
    </location>
    <ligand>
        <name>O2</name>
        <dbReference type="ChEBI" id="CHEBI:15379"/>
    </ligand>
</feature>
<feature type="binding site" evidence="1">
    <location>
        <position position="50"/>
    </location>
    <ligand>
        <name>Fe cation</name>
        <dbReference type="ChEBI" id="CHEBI:24875"/>
        <label>1</label>
        <note>catalytic</note>
    </ligand>
</feature>
<feature type="binding site" evidence="1">
    <location>
        <position position="56"/>
    </location>
    <ligand>
        <name>Fe cation</name>
        <dbReference type="ChEBI" id="CHEBI:24875"/>
        <label>1</label>
        <note>catalytic</note>
    </ligand>
</feature>
<feature type="binding site" evidence="1">
    <location>
        <position position="56"/>
    </location>
    <ligand>
        <name>substrate</name>
    </ligand>
</feature>
<feature type="binding site" evidence="1">
    <location>
        <position position="94"/>
    </location>
    <ligand>
        <name>Fe cation</name>
        <dbReference type="ChEBI" id="CHEBI:24875"/>
        <label>1</label>
        <note>catalytic</note>
    </ligand>
</feature>
<feature type="binding site" evidence="1">
    <location>
        <position position="98"/>
    </location>
    <ligand>
        <name>substrate</name>
    </ligand>
</feature>
<feature type="binding site" evidence="1">
    <location>
        <position position="109"/>
    </location>
    <ligand>
        <name>substrate</name>
    </ligand>
</feature>
<feature type="binding site" evidence="1">
    <location>
        <position position="124"/>
    </location>
    <ligand>
        <name>Fe cation</name>
        <dbReference type="ChEBI" id="CHEBI:24875"/>
        <label>2</label>
    </ligand>
</feature>
<feature type="binding site" evidence="1">
    <location>
        <position position="127"/>
    </location>
    <ligand>
        <name>Fe cation</name>
        <dbReference type="ChEBI" id="CHEBI:24875"/>
        <label>2</label>
    </ligand>
</feature>
<feature type="binding site" evidence="1">
    <location>
        <position position="161"/>
    </location>
    <ligand>
        <name>Fe cation</name>
        <dbReference type="ChEBI" id="CHEBI:24875"/>
        <label>2</label>
    </ligand>
</feature>
<feature type="binding site" evidence="1">
    <location>
        <position position="164"/>
    </location>
    <ligand>
        <name>Fe cation</name>
        <dbReference type="ChEBI" id="CHEBI:24875"/>
        <label>2</label>
    </ligand>
</feature>
<dbReference type="EC" id="1.13.11.6" evidence="1"/>
<dbReference type="EMBL" id="CP000264">
    <property type="protein sequence ID" value="ABD54364.1"/>
    <property type="molecule type" value="Genomic_DNA"/>
</dbReference>
<dbReference type="RefSeq" id="WP_011454571.1">
    <property type="nucleotide sequence ID" value="NC_007802.1"/>
</dbReference>
<dbReference type="SMR" id="Q28SE8"/>
<dbReference type="STRING" id="290400.Jann_1447"/>
<dbReference type="KEGG" id="jan:Jann_1447"/>
<dbReference type="eggNOG" id="COG1917">
    <property type="taxonomic scope" value="Bacteria"/>
</dbReference>
<dbReference type="HOGENOM" id="CLU_095765_0_0_5"/>
<dbReference type="OrthoDB" id="5002379at2"/>
<dbReference type="UniPathway" id="UPA00253">
    <property type="reaction ID" value="UER00330"/>
</dbReference>
<dbReference type="Proteomes" id="UP000008326">
    <property type="component" value="Chromosome"/>
</dbReference>
<dbReference type="GO" id="GO:0000334">
    <property type="term" value="F:3-hydroxyanthranilate 3,4-dioxygenase activity"/>
    <property type="evidence" value="ECO:0007669"/>
    <property type="project" value="UniProtKB-UniRule"/>
</dbReference>
<dbReference type="GO" id="GO:0008198">
    <property type="term" value="F:ferrous iron binding"/>
    <property type="evidence" value="ECO:0007669"/>
    <property type="project" value="UniProtKB-UniRule"/>
</dbReference>
<dbReference type="GO" id="GO:0043420">
    <property type="term" value="P:anthranilate metabolic process"/>
    <property type="evidence" value="ECO:0007669"/>
    <property type="project" value="UniProtKB-UniRule"/>
</dbReference>
<dbReference type="GO" id="GO:0006569">
    <property type="term" value="P:L-tryptophan catabolic process"/>
    <property type="evidence" value="ECO:0007669"/>
    <property type="project" value="UniProtKB-UniRule"/>
</dbReference>
<dbReference type="GO" id="GO:0009435">
    <property type="term" value="P:NAD biosynthetic process"/>
    <property type="evidence" value="ECO:0007669"/>
    <property type="project" value="UniProtKB-UniPathway"/>
</dbReference>
<dbReference type="GO" id="GO:0019805">
    <property type="term" value="P:quinolinate biosynthetic process"/>
    <property type="evidence" value="ECO:0007669"/>
    <property type="project" value="UniProtKB-UniRule"/>
</dbReference>
<dbReference type="CDD" id="cd06123">
    <property type="entry name" value="cupin_HAO"/>
    <property type="match status" value="1"/>
</dbReference>
<dbReference type="Gene3D" id="2.60.120.10">
    <property type="entry name" value="Jelly Rolls"/>
    <property type="match status" value="1"/>
</dbReference>
<dbReference type="HAMAP" id="MF_00825">
    <property type="entry name" value="3_HAO"/>
    <property type="match status" value="1"/>
</dbReference>
<dbReference type="InterPro" id="IPR010329">
    <property type="entry name" value="3hydroanth_dOase"/>
</dbReference>
<dbReference type="InterPro" id="IPR014710">
    <property type="entry name" value="RmlC-like_jellyroll"/>
</dbReference>
<dbReference type="InterPro" id="IPR011051">
    <property type="entry name" value="RmlC_Cupin_sf"/>
</dbReference>
<dbReference type="NCBIfam" id="TIGR03037">
    <property type="entry name" value="anthran_nbaC"/>
    <property type="match status" value="1"/>
</dbReference>
<dbReference type="NCBIfam" id="NF009763">
    <property type="entry name" value="PRK13264.1"/>
    <property type="match status" value="1"/>
</dbReference>
<dbReference type="PANTHER" id="PTHR15497">
    <property type="entry name" value="3-HYDROXYANTHRANILATE 3,4-DIOXYGENASE"/>
    <property type="match status" value="1"/>
</dbReference>
<dbReference type="PANTHER" id="PTHR15497:SF1">
    <property type="entry name" value="3-HYDROXYANTHRANILATE 3,4-DIOXYGENASE"/>
    <property type="match status" value="1"/>
</dbReference>
<dbReference type="Pfam" id="PF06052">
    <property type="entry name" value="3-HAO"/>
    <property type="match status" value="1"/>
</dbReference>
<dbReference type="SUPFAM" id="SSF51182">
    <property type="entry name" value="RmlC-like cupins"/>
    <property type="match status" value="1"/>
</dbReference>
<evidence type="ECO:0000255" key="1">
    <source>
        <dbReference type="HAMAP-Rule" id="MF_00825"/>
    </source>
</evidence>
<accession>Q28SE8</accession>
<keyword id="KW-0223">Dioxygenase</keyword>
<keyword id="KW-0408">Iron</keyword>
<keyword id="KW-0479">Metal-binding</keyword>
<keyword id="KW-0560">Oxidoreductase</keyword>
<keyword id="KW-0662">Pyridine nucleotide biosynthesis</keyword>
<keyword id="KW-1185">Reference proteome</keyword>
<proteinExistence type="inferred from homology"/>
<gene>
    <name evidence="1" type="primary">nbaC</name>
    <name type="ordered locus">Jann_1447</name>
</gene>
<comment type="function">
    <text evidence="1">Catalyzes the oxidative ring opening of 3-hydroxyanthranilate to 2-amino-3-carboxymuconate semialdehyde, which spontaneously cyclizes to quinolinate.</text>
</comment>
<comment type="catalytic activity">
    <reaction evidence="1">
        <text>3-hydroxyanthranilate + O2 = (2Z,4Z)-2-amino-3-carboxymuconate 6-semialdehyde</text>
        <dbReference type="Rhea" id="RHEA:17953"/>
        <dbReference type="ChEBI" id="CHEBI:15379"/>
        <dbReference type="ChEBI" id="CHEBI:36559"/>
        <dbReference type="ChEBI" id="CHEBI:77612"/>
        <dbReference type="EC" id="1.13.11.6"/>
    </reaction>
</comment>
<comment type="cofactor">
    <cofactor evidence="1">
        <name>Fe(2+)</name>
        <dbReference type="ChEBI" id="CHEBI:29033"/>
    </cofactor>
    <text evidence="1">Binds 2 Fe(2+) ions per subunit.</text>
</comment>
<comment type="pathway">
    <text evidence="1">Cofactor biosynthesis; NAD(+) biosynthesis; quinolinate from L-kynurenine: step 3/3.</text>
</comment>
<comment type="subunit">
    <text evidence="1">Homodimer.</text>
</comment>
<comment type="similarity">
    <text evidence="1">Belongs to the 3-HAO family.</text>
</comment>
<sequence length="180" mass="20439">MARLSAFNFKAWIDEHRHLLKPPVGNKMVYEDADLMVTVVGGPNKRTDYHDDPVEEFFYQLEGDMVLKLYDGEEFYDVPIREGEIFLLPPHMRHSPQRPQEGSVGLVIEAKRPEGAADAIEWYCFNCGNLVHRAELMLTSIVDDLPPVYQAFYASEEARTCGSCGEVHPGKEPPEGWVTL</sequence>
<protein>
    <recommendedName>
        <fullName evidence="1">3-hydroxyanthranilate 3,4-dioxygenase</fullName>
        <ecNumber evidence="1">1.13.11.6</ecNumber>
    </recommendedName>
    <alternativeName>
        <fullName evidence="1">3-hydroxyanthranilate oxygenase</fullName>
        <shortName evidence="1">3-HAO</shortName>
    </alternativeName>
    <alternativeName>
        <fullName evidence="1">3-hydroxyanthranilic acid dioxygenase</fullName>
        <shortName evidence="1">HAD</shortName>
    </alternativeName>
</protein>